<keyword id="KW-0025">Alternative splicing</keyword>
<keyword id="KW-0223">Dioxygenase</keyword>
<keyword id="KW-0349">Heme</keyword>
<keyword id="KW-0408">Iron</keyword>
<keyword id="KW-0479">Metal-binding</keyword>
<keyword id="KW-0560">Oxidoreductase</keyword>
<keyword id="KW-1185">Reference proteome</keyword>
<keyword id="KW-0823">Tryptophan catabolism</keyword>
<evidence type="ECO:0000255" key="1">
    <source>
        <dbReference type="HAMAP-Rule" id="MF_03020"/>
    </source>
</evidence>
<evidence type="ECO:0000269" key="2">
    <source>
    </source>
</evidence>
<evidence type="ECO:0000269" key="3">
    <source>
    </source>
</evidence>
<evidence type="ECO:0000305" key="4"/>
<evidence type="ECO:0000305" key="5">
    <source>
    </source>
</evidence>
<evidence type="ECO:0000312" key="6">
    <source>
        <dbReference type="WormBase" id="C28H8.11a"/>
    </source>
</evidence>
<evidence type="ECO:0000312" key="7">
    <source>
        <dbReference type="WormBase" id="C28H8.11c"/>
    </source>
</evidence>
<proteinExistence type="evidence at protein level"/>
<organism>
    <name type="scientific">Caenorhabditis elegans</name>
    <dbReference type="NCBI Taxonomy" id="6239"/>
    <lineage>
        <taxon>Eukaryota</taxon>
        <taxon>Metazoa</taxon>
        <taxon>Ecdysozoa</taxon>
        <taxon>Nematoda</taxon>
        <taxon>Chromadorea</taxon>
        <taxon>Rhabditida</taxon>
        <taxon>Rhabditina</taxon>
        <taxon>Rhabditomorpha</taxon>
        <taxon>Rhabditoidea</taxon>
        <taxon>Rhabditidae</taxon>
        <taxon>Peloderinae</taxon>
        <taxon>Caenorhabditis</taxon>
    </lineage>
</organism>
<protein>
    <recommendedName>
        <fullName evidence="1">Tryptophan 2,3-dioxygenase</fullName>
        <shortName evidence="1">TDO</shortName>
        <ecNumber evidence="1 3">1.13.11.11</ecNumber>
    </recommendedName>
    <alternativeName>
        <fullName evidence="1">Tryptamin 2,3-dioxygenase</fullName>
    </alternativeName>
    <alternativeName>
        <fullName evidence="1">Tryptophan oxygenase</fullName>
        <shortName evidence="1">TO</shortName>
        <shortName evidence="1">TRPO</shortName>
    </alternativeName>
    <alternativeName>
        <fullName evidence="1">Tryptophan pyrrolase</fullName>
    </alternativeName>
    <alternativeName>
        <fullName evidence="1">Tryptophanase</fullName>
    </alternativeName>
</protein>
<gene>
    <name evidence="6" type="primary">tdo-2</name>
    <name evidence="6" type="ORF">C28H8.11</name>
</gene>
<accession>Q09474</accession>
<accession>Q27GU8</accession>
<accession>Q8I7L6</accession>
<feature type="chain" id="PRO_0000072398" description="Tryptophan 2,3-dioxygenase">
    <location>
        <begin position="1"/>
        <end position="403"/>
    </location>
</feature>
<feature type="short sequence motif" description="PLD motif; required for enzymatic activity" evidence="3">
    <location>
        <begin position="133"/>
        <end position="135"/>
    </location>
</feature>
<feature type="binding site" evidence="1">
    <location>
        <begin position="69"/>
        <end position="73"/>
    </location>
    <ligand>
        <name>substrate</name>
    </ligand>
</feature>
<feature type="binding site" evidence="1">
    <location>
        <position position="140"/>
    </location>
    <ligand>
        <name>substrate</name>
    </ligand>
</feature>
<feature type="binding site" description="axial binding residue" evidence="1">
    <location>
        <position position="327"/>
    </location>
    <ligand>
        <name>heme</name>
        <dbReference type="ChEBI" id="CHEBI:30413"/>
    </ligand>
    <ligandPart>
        <name>Fe</name>
        <dbReference type="ChEBI" id="CHEBI:18248"/>
    </ligandPart>
</feature>
<feature type="binding site" evidence="1">
    <location>
        <position position="341"/>
    </location>
    <ligand>
        <name>substrate</name>
    </ligand>
</feature>
<feature type="splice variant" id="VSP_057311" description="In isoform c." evidence="4">
    <location>
        <begin position="1"/>
        <end position="291"/>
    </location>
</feature>
<feature type="mutagenesis site" description="Abolishes catalytic activity. Animals have an extended lifespan, an extended reproductive lifespan, have fewer hatched progeny and display increased motility." evidence="3">
    <location>
        <begin position="133"/>
        <end position="135"/>
    </location>
</feature>
<sequence>MACPYLGSGELTHRVTFMEGGEECQQGVNKVEMGFGQTYSEYLQLDKILTAQRLKSEADGQRVDDEHLFIVIHQAHELWFKQIIFDLDNVRKLLNNTIVDETKTLKIVSGLDRMTKILSLLTEQITLLDTMSPLDFVDFRKYLTPASGFQSLQFRVLENKLGVRQERRIKYNAQHYKNVFNDTDLKTLNVTEEEKSLLTLIESWLERTPGLKSTSEDEGFWIKYEKSVNKYLADLAKQAADPSNTEEIAKQLTAEYHKTADAFQSILDPRQHEQHIRNGNRLLSHDATKGAMMIYFYRDMPRFSQPYQILTFLMDIDSLFTKWRYNHVLLVQRMLGAKQGTGGSSGYMYLRSTVSDRYKVFLDLFNLSTWLIPREYIPMLSPRMVKTLSEHSNLSHSQSSESD</sequence>
<dbReference type="EC" id="1.13.11.11" evidence="1 3"/>
<dbReference type="EMBL" id="BX284603">
    <property type="protein sequence ID" value="CCD65972.1"/>
    <property type="molecule type" value="Genomic_DNA"/>
</dbReference>
<dbReference type="EMBL" id="BX284603">
    <property type="protein sequence ID" value="CCD65974.1"/>
    <property type="molecule type" value="Genomic_DNA"/>
</dbReference>
<dbReference type="PIR" id="B88470">
    <property type="entry name" value="B88470"/>
</dbReference>
<dbReference type="RefSeq" id="NP_001040847.1">
    <molecule id="Q09474-3"/>
    <property type="nucleotide sequence ID" value="NM_001047382.6"/>
</dbReference>
<dbReference type="RefSeq" id="NP_498284.1">
    <molecule id="Q09474-1"/>
    <property type="nucleotide sequence ID" value="NM_065883.5"/>
</dbReference>
<dbReference type="SMR" id="Q09474"/>
<dbReference type="BioGRID" id="41057">
    <property type="interactions" value="8"/>
</dbReference>
<dbReference type="DIP" id="DIP-26438N"/>
<dbReference type="FunCoup" id="Q09474">
    <property type="interactions" value="145"/>
</dbReference>
<dbReference type="IntAct" id="Q09474">
    <property type="interactions" value="3"/>
</dbReference>
<dbReference type="STRING" id="6239.C28H8.11a.2"/>
<dbReference type="PaxDb" id="6239-C28H8.11a.1"/>
<dbReference type="PeptideAtlas" id="Q09474"/>
<dbReference type="EnsemblMetazoa" id="C28H8.11a.1">
    <molecule id="Q09474-1"/>
    <property type="protein sequence ID" value="C28H8.11a.1"/>
    <property type="gene ID" value="WBGene00016201"/>
</dbReference>
<dbReference type="EnsemblMetazoa" id="C28H8.11c.1">
    <molecule id="Q09474-3"/>
    <property type="protein sequence ID" value="C28H8.11c.1"/>
    <property type="gene ID" value="WBGene00016201"/>
</dbReference>
<dbReference type="GeneID" id="175836"/>
<dbReference type="KEGG" id="cel:CELE_C28H8.11"/>
<dbReference type="UCSC" id="C28H8.11c.3">
    <property type="organism name" value="c. elegans"/>
</dbReference>
<dbReference type="AGR" id="WB:WBGene00016201"/>
<dbReference type="CTD" id="175836"/>
<dbReference type="WormBase" id="C28H8.11a">
    <molecule id="Q09474-1"/>
    <property type="protein sequence ID" value="CE01822"/>
    <property type="gene ID" value="WBGene00016201"/>
    <property type="gene designation" value="tdo-2"/>
</dbReference>
<dbReference type="WormBase" id="C28H8.11c">
    <molecule id="Q09474-3"/>
    <property type="protein sequence ID" value="CE39680"/>
    <property type="gene ID" value="WBGene00016201"/>
    <property type="gene designation" value="tdo-2"/>
</dbReference>
<dbReference type="eggNOG" id="KOG3906">
    <property type="taxonomic scope" value="Eukaryota"/>
</dbReference>
<dbReference type="GeneTree" id="ENSGT00390000008593"/>
<dbReference type="HOGENOM" id="CLU_045599_1_1_1"/>
<dbReference type="InParanoid" id="Q09474"/>
<dbReference type="OMA" id="WRWRNDH"/>
<dbReference type="OrthoDB" id="447477at2759"/>
<dbReference type="PhylomeDB" id="Q09474"/>
<dbReference type="BRENDA" id="1.13.11.11">
    <property type="organism ID" value="1045"/>
</dbReference>
<dbReference type="Reactome" id="R-CEL-71240">
    <property type="pathway name" value="Tryptophan catabolism"/>
</dbReference>
<dbReference type="UniPathway" id="UPA00333">
    <property type="reaction ID" value="UER00453"/>
</dbReference>
<dbReference type="PRO" id="PR:Q09474"/>
<dbReference type="Proteomes" id="UP000001940">
    <property type="component" value="Chromosome III"/>
</dbReference>
<dbReference type="Bgee" id="WBGene00016201">
    <property type="expression patterns" value="Expressed in larva and 4 other cell types or tissues"/>
</dbReference>
<dbReference type="GO" id="GO:0020037">
    <property type="term" value="F:heme binding"/>
    <property type="evidence" value="ECO:0000318"/>
    <property type="project" value="GO_Central"/>
</dbReference>
<dbReference type="GO" id="GO:0046872">
    <property type="term" value="F:metal ion binding"/>
    <property type="evidence" value="ECO:0007669"/>
    <property type="project" value="UniProtKB-KW"/>
</dbReference>
<dbReference type="GO" id="GO:0004833">
    <property type="term" value="F:tryptophan 2,3-dioxygenase activity"/>
    <property type="evidence" value="ECO:0000318"/>
    <property type="project" value="GO_Central"/>
</dbReference>
<dbReference type="GO" id="GO:0019442">
    <property type="term" value="P:L-tryptophan catabolic process to acetyl-CoA"/>
    <property type="evidence" value="ECO:0000318"/>
    <property type="project" value="GO_Central"/>
</dbReference>
<dbReference type="GO" id="GO:0019441">
    <property type="term" value="P:L-tryptophan catabolic process to kynurenine"/>
    <property type="evidence" value="ECO:0007669"/>
    <property type="project" value="UniProtKB-UniRule"/>
</dbReference>
<dbReference type="FunFam" id="1.10.287.3810:FF:000001">
    <property type="entry name" value="Tryptophan 2,3-dioxygenase"/>
    <property type="match status" value="1"/>
</dbReference>
<dbReference type="Gene3D" id="1.10.287.3810">
    <property type="match status" value="1"/>
</dbReference>
<dbReference type="Gene3D" id="1.20.58.480">
    <property type="match status" value="1"/>
</dbReference>
<dbReference type="HAMAP" id="MF_01972">
    <property type="entry name" value="T23O"/>
    <property type="match status" value="1"/>
</dbReference>
<dbReference type="InterPro" id="IPR037217">
    <property type="entry name" value="Trp/Indoleamine_2_3_dOase-like"/>
</dbReference>
<dbReference type="InterPro" id="IPR004981">
    <property type="entry name" value="Trp_2_3_dOase"/>
</dbReference>
<dbReference type="PANTHER" id="PTHR10138">
    <property type="entry name" value="TRYPTOPHAN 2,3-DIOXYGENASE"/>
    <property type="match status" value="1"/>
</dbReference>
<dbReference type="PANTHER" id="PTHR10138:SF0">
    <property type="entry name" value="TRYPTOPHAN 2,3-DIOXYGENASE"/>
    <property type="match status" value="1"/>
</dbReference>
<dbReference type="Pfam" id="PF03301">
    <property type="entry name" value="Trp_dioxygenase"/>
    <property type="match status" value="1"/>
</dbReference>
<dbReference type="SUPFAM" id="SSF140959">
    <property type="entry name" value="Indolic compounds 2,3-dioxygenase-like"/>
    <property type="match status" value="1"/>
</dbReference>
<comment type="function">
    <text evidence="1 2 3">Heme-dependent dioxygenase that catalyzes the oxidative cleavage of the L-tryptophan (L-Trp) pyrrole ring and converts L-tryptophan to N-formyl-L-kynurenine (PubMed:27995966). Catalyzes the oxidative cleavage of the indole moiety (PubMed:27995966). Involved in regulation of protein homeostasis, longevity and reproducive life span (PubMed:22927396, PubMed:27995966). Specifically regulates proteotoxicity due to age-related aggregation of proteins like alpha-synuclein, via its effects on tryptophan metabolism (PubMed:22927396).</text>
</comment>
<comment type="catalytic activity">
    <reaction evidence="1 3">
        <text>L-tryptophan + O2 = N-formyl-L-kynurenine</text>
        <dbReference type="Rhea" id="RHEA:24536"/>
        <dbReference type="ChEBI" id="CHEBI:15379"/>
        <dbReference type="ChEBI" id="CHEBI:57912"/>
        <dbReference type="ChEBI" id="CHEBI:58629"/>
        <dbReference type="EC" id="1.13.11.11"/>
    </reaction>
</comment>
<comment type="cofactor">
    <cofactor evidence="1">
        <name>heme</name>
        <dbReference type="ChEBI" id="CHEBI:30413"/>
    </cofactor>
    <text evidence="1">Binds 1 heme group per subunit.</text>
</comment>
<comment type="pathway">
    <text evidence="1 2 5">Amino-acid degradation; L-tryptophan degradation via kynurenine pathway; L-kynurenine from L-tryptophan: step 1/2.</text>
</comment>
<comment type="subunit">
    <text evidence="1">Homotetramer. Dimer of dimers.</text>
</comment>
<comment type="alternative products">
    <event type="alternative splicing"/>
    <isoform>
        <id>Q09474-1</id>
        <name evidence="6">a</name>
        <sequence type="displayed"/>
    </isoform>
    <isoform>
        <id>Q09474-3</id>
        <name evidence="7">c</name>
        <sequence type="described" ref="VSP_057311"/>
    </isoform>
</comment>
<comment type="tissue specificity">
    <text evidence="2">Expressed in body wall muscle cells, hypodermis, PLM neurons and touch-receptor neurons.</text>
</comment>
<comment type="disruption phenotype">
    <text evidence="2">RNAi-mediated knockdown of the protein increases longevity and causes a delayed and extended reproductive life span without increasing total progeny. Animals show increased levels of tryptophan, reduced sensitivity to proteotoxic aggregates of alpha-synuclein and reduced age-related decline of motility. A double knockdown of tdo-2 together with an enzyme downstream in the kynurenine pathway, kmo-1, flu-2, afmd-1 or haao-1, causes an increase in motility and tryptophan levels and suppresses the proteotoxicity similarly to knock-down of tdo-2 alone. RNAi-mediated knockdown in a tph-1 deletion background, which is necessary for synthesis of serotonin from trypotophan, shows increased motility, but variable suppression of proteotoxicity. RNAi-mediated knockdown in a mutant background for daf-16, which functions in the IIS pathway, shows suppression of proteotoxicity and only a small increase in median, but not mean life span. RNAi-mediated knockdown in a mutant background for hsf-1, which also functions in the IIS pathway, shows suppression of proteotoxicity and a small increase in life span. RNAi-mediated knockdown in a mutant background for hif-1, which functions in the hypoxia stress response pathway, shows an increase in median, but not mean life span that is lower than for the tdo-2 knockdown alone. RNAi-mediated knockdown in a mutant background for eat-2, which is used as a model for dietary restriction, shows suppression of proteotoxicity and an increase in life span.</text>
</comment>
<comment type="similarity">
    <text evidence="1">Belongs to the tryptophan 2,3-dioxygenase family.</text>
</comment>
<reference key="1">
    <citation type="journal article" date="1998" name="Science">
        <title>Genome sequence of the nematode C. elegans: a platform for investigating biology.</title>
        <authorList>
            <consortium name="The C. elegans sequencing consortium"/>
        </authorList>
    </citation>
    <scope>NUCLEOTIDE SEQUENCE [LARGE SCALE GENOMIC DNA]</scope>
    <source>
        <strain>Bristol N2</strain>
    </source>
</reference>
<reference key="2">
    <citation type="journal article" date="2012" name="Proc. Natl. Acad. Sci. U.S.A.">
        <title>Delaying aging and the aging-associated decline in protein homeostasis by inhibition of tryptophan degradation.</title>
        <authorList>
            <person name="van der Goot A.T."/>
            <person name="Zhu W."/>
            <person name="Vazquez-Manrique R.P."/>
            <person name="Seinstra R.I."/>
            <person name="Dettmer K."/>
            <person name="Michels H."/>
            <person name="Farina F."/>
            <person name="Krijnen J."/>
            <person name="Melki R."/>
            <person name="Buijsman R.C."/>
            <person name="Ruiz Silva M."/>
            <person name="Thijssen K.L."/>
            <person name="Kema I.P."/>
            <person name="Neri C."/>
            <person name="Oefner P.J."/>
            <person name="Nollen E.A."/>
        </authorList>
    </citation>
    <scope>FUNCTION</scope>
    <scope>PATHWAY</scope>
    <scope>TISSUE SPECIFICITY</scope>
    <scope>DISRUPTION PHENOTYPE</scope>
</reference>
<reference key="3">
    <citation type="journal article" date="2016" name="Sci. Rep.">
        <title>Identification of an evolutionary conserved structural loop that is required for the enzymatic and biological function of tryptophan 2,3-dioxygenase.</title>
        <authorList>
            <person name="Michels H."/>
            <person name="Seinstra R.I."/>
            <person name="Uitdehaag J.C."/>
            <person name="Koopman M."/>
            <person name="van Faassen M."/>
            <person name="Martineau C.N."/>
            <person name="Kema I.P."/>
            <person name="Buijsman R."/>
            <person name="Nollen E.A."/>
        </authorList>
    </citation>
    <scope>FUNCTION</scope>
    <scope>CATALYTIC ACTIVITY</scope>
    <scope>PATHWAY</scope>
    <scope>MUTAGENESIS OF 133-PRO--ASP-135</scope>
</reference>
<name>T23O_CAEEL</name>